<comment type="function">
    <text evidence="1">NDH-1 shuttles electrons from NADH, via FMN and iron-sulfur (Fe-S) centers, to quinones in the respiratory chain. The immediate electron acceptor for the enzyme in this species is believed to be ubiquinone. Couples the redox reaction to proton translocation (for every two electrons transferred, four hydrogen ions are translocated across the cytoplasmic membrane), and thus conserves the redox energy in a proton gradient. This subunit may bind ubiquinone.</text>
</comment>
<comment type="catalytic activity">
    <reaction evidence="1">
        <text>a quinone + NADH + 5 H(+)(in) = a quinol + NAD(+) + 4 H(+)(out)</text>
        <dbReference type="Rhea" id="RHEA:57888"/>
        <dbReference type="ChEBI" id="CHEBI:15378"/>
        <dbReference type="ChEBI" id="CHEBI:24646"/>
        <dbReference type="ChEBI" id="CHEBI:57540"/>
        <dbReference type="ChEBI" id="CHEBI:57945"/>
        <dbReference type="ChEBI" id="CHEBI:132124"/>
    </reaction>
</comment>
<comment type="subunit">
    <text evidence="1">NDH-1 is composed of 14 different subunits. Subunits NuoA, H, J, K, L, M, N constitute the membrane sector of the complex.</text>
</comment>
<comment type="subcellular location">
    <subcellularLocation>
        <location evidence="1">Cell inner membrane</location>
        <topology evidence="1">Multi-pass membrane protein</topology>
    </subcellularLocation>
</comment>
<comment type="similarity">
    <text evidence="1">Belongs to the complex I subunit 1 family.</text>
</comment>
<organism>
    <name type="scientific">Burkholderia thailandensis (strain ATCC 700388 / DSM 13276 / CCUG 48851 / CIP 106301 / E264)</name>
    <dbReference type="NCBI Taxonomy" id="271848"/>
    <lineage>
        <taxon>Bacteria</taxon>
        <taxon>Pseudomonadati</taxon>
        <taxon>Pseudomonadota</taxon>
        <taxon>Betaproteobacteria</taxon>
        <taxon>Burkholderiales</taxon>
        <taxon>Burkholderiaceae</taxon>
        <taxon>Burkholderia</taxon>
        <taxon>pseudomallei group</taxon>
    </lineage>
</organism>
<dbReference type="EC" id="7.1.1.-" evidence="1"/>
<dbReference type="EMBL" id="CP000086">
    <property type="protein sequence ID" value="ABC38208.1"/>
    <property type="molecule type" value="Genomic_DNA"/>
</dbReference>
<dbReference type="RefSeq" id="WP_009892166.1">
    <property type="nucleotide sequence ID" value="NZ_CP008785.1"/>
</dbReference>
<dbReference type="SMR" id="Q2SZM8"/>
<dbReference type="GeneID" id="45120820"/>
<dbReference type="KEGG" id="bte:BTH_I1068"/>
<dbReference type="HOGENOM" id="CLU_015134_0_1_4"/>
<dbReference type="Proteomes" id="UP000001930">
    <property type="component" value="Chromosome I"/>
</dbReference>
<dbReference type="GO" id="GO:0005886">
    <property type="term" value="C:plasma membrane"/>
    <property type="evidence" value="ECO:0007669"/>
    <property type="project" value="UniProtKB-SubCell"/>
</dbReference>
<dbReference type="GO" id="GO:0003954">
    <property type="term" value="F:NADH dehydrogenase activity"/>
    <property type="evidence" value="ECO:0007669"/>
    <property type="project" value="TreeGrafter"/>
</dbReference>
<dbReference type="GO" id="GO:0016655">
    <property type="term" value="F:oxidoreductase activity, acting on NAD(P)H, quinone or similar compound as acceptor"/>
    <property type="evidence" value="ECO:0007669"/>
    <property type="project" value="UniProtKB-UniRule"/>
</dbReference>
<dbReference type="GO" id="GO:0048038">
    <property type="term" value="F:quinone binding"/>
    <property type="evidence" value="ECO:0007669"/>
    <property type="project" value="UniProtKB-KW"/>
</dbReference>
<dbReference type="GO" id="GO:0009060">
    <property type="term" value="P:aerobic respiration"/>
    <property type="evidence" value="ECO:0007669"/>
    <property type="project" value="TreeGrafter"/>
</dbReference>
<dbReference type="HAMAP" id="MF_01350">
    <property type="entry name" value="NDH1_NuoH"/>
    <property type="match status" value="1"/>
</dbReference>
<dbReference type="InterPro" id="IPR001694">
    <property type="entry name" value="NADH_UbQ_OxRdtase_su1/FPO"/>
</dbReference>
<dbReference type="InterPro" id="IPR018086">
    <property type="entry name" value="NADH_UbQ_OxRdtase_su1_CS"/>
</dbReference>
<dbReference type="NCBIfam" id="NF004741">
    <property type="entry name" value="PRK06076.1-2"/>
    <property type="match status" value="1"/>
</dbReference>
<dbReference type="NCBIfam" id="NF004742">
    <property type="entry name" value="PRK06076.1-3"/>
    <property type="match status" value="1"/>
</dbReference>
<dbReference type="PANTHER" id="PTHR11432">
    <property type="entry name" value="NADH DEHYDROGENASE SUBUNIT 1"/>
    <property type="match status" value="1"/>
</dbReference>
<dbReference type="PANTHER" id="PTHR11432:SF3">
    <property type="entry name" value="NADH-UBIQUINONE OXIDOREDUCTASE CHAIN 1"/>
    <property type="match status" value="1"/>
</dbReference>
<dbReference type="Pfam" id="PF00146">
    <property type="entry name" value="NADHdh"/>
    <property type="match status" value="1"/>
</dbReference>
<dbReference type="PROSITE" id="PS00668">
    <property type="entry name" value="COMPLEX1_ND1_2"/>
    <property type="match status" value="1"/>
</dbReference>
<feature type="chain" id="PRO_0000244909" description="NADH-quinone oxidoreductase subunit H">
    <location>
        <begin position="1"/>
        <end position="354"/>
    </location>
</feature>
<feature type="transmembrane region" description="Helical" evidence="1">
    <location>
        <begin position="25"/>
        <end position="45"/>
    </location>
</feature>
<feature type="transmembrane region" description="Helical" evidence="1">
    <location>
        <begin position="91"/>
        <end position="111"/>
    </location>
</feature>
<feature type="transmembrane region" description="Helical" evidence="1">
    <location>
        <begin position="126"/>
        <end position="146"/>
    </location>
</feature>
<feature type="transmembrane region" description="Helical" evidence="1">
    <location>
        <begin position="170"/>
        <end position="190"/>
    </location>
</feature>
<feature type="transmembrane region" description="Helical" evidence="1">
    <location>
        <begin position="205"/>
        <end position="225"/>
    </location>
</feature>
<feature type="transmembrane region" description="Helical" evidence="1">
    <location>
        <begin position="253"/>
        <end position="273"/>
    </location>
</feature>
<feature type="transmembrane region" description="Helical" evidence="1">
    <location>
        <begin position="290"/>
        <end position="310"/>
    </location>
</feature>
<feature type="transmembrane region" description="Helical" evidence="1">
    <location>
        <begin position="330"/>
        <end position="350"/>
    </location>
</feature>
<sequence length="354" mass="39169">MSLFDTINSGGAQLLGVAWPTVWALVRILVVAVVILLCVAYLILWERKLIGWMHVRLGPNRVGPAGLLQPIADVLKLLLKEVIHPTAASRWLYLIAPVMTVVPAFAVWAVIPFQAGAVLANINAGLLYAMAISSIGVYAVILAGWASNSKYAFLGAMRAAAQMVSYEISMGFALVLVLMTAGSLNLSEIVGSQQHGFFAGHGVNFLSWNWLPLLPVFVIYFISGIAETNRHPFDVVEGESEIVAGHMIDYSGMAFALFFLAEYINMIVISALAATLFLGGWDAPFEFLSFIPGIFWLVLKVFALLSVFIWARATFPRYRYDQIMRLGWKVFLPVCVFWVIVVGFWMMSPLNIWK</sequence>
<gene>
    <name evidence="1" type="primary">nuoH</name>
    <name type="ordered locus">BTH_I1068</name>
</gene>
<reference key="1">
    <citation type="journal article" date="2005" name="BMC Genomics">
        <title>Bacterial genome adaptation to niches: divergence of the potential virulence genes in three Burkholderia species of different survival strategies.</title>
        <authorList>
            <person name="Kim H.S."/>
            <person name="Schell M.A."/>
            <person name="Yu Y."/>
            <person name="Ulrich R.L."/>
            <person name="Sarria S.H."/>
            <person name="Nierman W.C."/>
            <person name="DeShazer D."/>
        </authorList>
    </citation>
    <scope>NUCLEOTIDE SEQUENCE [LARGE SCALE GENOMIC DNA]</scope>
    <source>
        <strain>ATCC 700388 / DSM 13276 / CCUG 48851 / CIP 106301 / E264</strain>
    </source>
</reference>
<accession>Q2SZM8</accession>
<keyword id="KW-0997">Cell inner membrane</keyword>
<keyword id="KW-1003">Cell membrane</keyword>
<keyword id="KW-0472">Membrane</keyword>
<keyword id="KW-0520">NAD</keyword>
<keyword id="KW-0874">Quinone</keyword>
<keyword id="KW-1278">Translocase</keyword>
<keyword id="KW-0812">Transmembrane</keyword>
<keyword id="KW-1133">Transmembrane helix</keyword>
<keyword id="KW-0830">Ubiquinone</keyword>
<name>NUOH_BURTA</name>
<evidence type="ECO:0000255" key="1">
    <source>
        <dbReference type="HAMAP-Rule" id="MF_01350"/>
    </source>
</evidence>
<protein>
    <recommendedName>
        <fullName evidence="1">NADH-quinone oxidoreductase subunit H</fullName>
        <ecNumber evidence="1">7.1.1.-</ecNumber>
    </recommendedName>
    <alternativeName>
        <fullName evidence="1">NADH dehydrogenase I subunit H</fullName>
    </alternativeName>
    <alternativeName>
        <fullName evidence="1">NDH-1 subunit H</fullName>
    </alternativeName>
</protein>
<proteinExistence type="inferred from homology"/>